<comment type="function">
    <text evidence="1">Single strand-specific metallo-endoribonuclease involved in late-stage 70S ribosome quality control and in maturation of the 3' terminus of the 16S rRNA.</text>
</comment>
<comment type="cofactor">
    <cofactor evidence="1">
        <name>Zn(2+)</name>
        <dbReference type="ChEBI" id="CHEBI:29105"/>
    </cofactor>
    <text evidence="1">Binds 1 zinc ion.</text>
</comment>
<comment type="subcellular location">
    <subcellularLocation>
        <location evidence="1">Cytoplasm</location>
    </subcellularLocation>
</comment>
<comment type="similarity">
    <text evidence="1">Belongs to the endoribonuclease YbeY family.</text>
</comment>
<dbReference type="EC" id="3.1.-.-" evidence="1"/>
<dbReference type="EMBL" id="CP000110">
    <property type="protein sequence ID" value="ABB36176.1"/>
    <property type="molecule type" value="Genomic_DNA"/>
</dbReference>
<dbReference type="RefSeq" id="WP_011365372.1">
    <property type="nucleotide sequence ID" value="NC_007516.1"/>
</dbReference>
<dbReference type="SMR" id="Q3AGV6"/>
<dbReference type="STRING" id="110662.Syncc9605_2444"/>
<dbReference type="KEGG" id="syd:Syncc9605_2444"/>
<dbReference type="eggNOG" id="COG0319">
    <property type="taxonomic scope" value="Bacteria"/>
</dbReference>
<dbReference type="HOGENOM" id="CLU_106710_3_0_3"/>
<dbReference type="OrthoDB" id="9807740at2"/>
<dbReference type="GO" id="GO:0005737">
    <property type="term" value="C:cytoplasm"/>
    <property type="evidence" value="ECO:0007669"/>
    <property type="project" value="UniProtKB-SubCell"/>
</dbReference>
<dbReference type="GO" id="GO:0004222">
    <property type="term" value="F:metalloendopeptidase activity"/>
    <property type="evidence" value="ECO:0007669"/>
    <property type="project" value="InterPro"/>
</dbReference>
<dbReference type="GO" id="GO:0004521">
    <property type="term" value="F:RNA endonuclease activity"/>
    <property type="evidence" value="ECO:0007669"/>
    <property type="project" value="UniProtKB-UniRule"/>
</dbReference>
<dbReference type="GO" id="GO:0008270">
    <property type="term" value="F:zinc ion binding"/>
    <property type="evidence" value="ECO:0007669"/>
    <property type="project" value="UniProtKB-UniRule"/>
</dbReference>
<dbReference type="GO" id="GO:0006364">
    <property type="term" value="P:rRNA processing"/>
    <property type="evidence" value="ECO:0007669"/>
    <property type="project" value="UniProtKB-UniRule"/>
</dbReference>
<dbReference type="Gene3D" id="3.40.390.30">
    <property type="entry name" value="Metalloproteases ('zincins'), catalytic domain"/>
    <property type="match status" value="1"/>
</dbReference>
<dbReference type="HAMAP" id="MF_00009">
    <property type="entry name" value="Endoribonucl_YbeY"/>
    <property type="match status" value="1"/>
</dbReference>
<dbReference type="InterPro" id="IPR023091">
    <property type="entry name" value="MetalPrtase_cat_dom_sf_prd"/>
</dbReference>
<dbReference type="InterPro" id="IPR002036">
    <property type="entry name" value="YbeY"/>
</dbReference>
<dbReference type="InterPro" id="IPR020549">
    <property type="entry name" value="YbeY_CS"/>
</dbReference>
<dbReference type="NCBIfam" id="TIGR00043">
    <property type="entry name" value="rRNA maturation RNase YbeY"/>
    <property type="match status" value="1"/>
</dbReference>
<dbReference type="PANTHER" id="PTHR46986">
    <property type="entry name" value="ENDORIBONUCLEASE YBEY, CHLOROPLASTIC"/>
    <property type="match status" value="1"/>
</dbReference>
<dbReference type="PANTHER" id="PTHR46986:SF1">
    <property type="entry name" value="ENDORIBONUCLEASE YBEY, CHLOROPLASTIC"/>
    <property type="match status" value="1"/>
</dbReference>
<dbReference type="Pfam" id="PF02130">
    <property type="entry name" value="YbeY"/>
    <property type="match status" value="1"/>
</dbReference>
<dbReference type="SUPFAM" id="SSF55486">
    <property type="entry name" value="Metalloproteases ('zincins'), catalytic domain"/>
    <property type="match status" value="1"/>
</dbReference>
<dbReference type="PROSITE" id="PS01306">
    <property type="entry name" value="UPF0054"/>
    <property type="match status" value="1"/>
</dbReference>
<reference key="1">
    <citation type="submission" date="2005-07" db="EMBL/GenBank/DDBJ databases">
        <title>Complete sequence of Synechococcus sp. CC9605.</title>
        <authorList>
            <consortium name="US DOE Joint Genome Institute"/>
            <person name="Copeland A."/>
            <person name="Lucas S."/>
            <person name="Lapidus A."/>
            <person name="Barry K."/>
            <person name="Detter J.C."/>
            <person name="Glavina T."/>
            <person name="Hammon N."/>
            <person name="Israni S."/>
            <person name="Pitluck S."/>
            <person name="Schmutz J."/>
            <person name="Martinez M."/>
            <person name="Larimer F."/>
            <person name="Land M."/>
            <person name="Kyrpides N."/>
            <person name="Ivanova N."/>
            <person name="Richardson P."/>
        </authorList>
    </citation>
    <scope>NUCLEOTIDE SEQUENCE [LARGE SCALE GENOMIC DNA]</scope>
    <source>
        <strain>CC9605</strain>
    </source>
</reference>
<gene>
    <name evidence="1" type="primary">ybeY</name>
    <name type="ordered locus">Syncc9605_2444</name>
</gene>
<accession>Q3AGV6</accession>
<keyword id="KW-0963">Cytoplasm</keyword>
<keyword id="KW-0255">Endonuclease</keyword>
<keyword id="KW-0378">Hydrolase</keyword>
<keyword id="KW-0479">Metal-binding</keyword>
<keyword id="KW-0540">Nuclease</keyword>
<keyword id="KW-0690">Ribosome biogenesis</keyword>
<keyword id="KW-0698">rRNA processing</keyword>
<keyword id="KW-0862">Zinc</keyword>
<protein>
    <recommendedName>
        <fullName evidence="1">Endoribonuclease YbeY</fullName>
        <ecNumber evidence="1">3.1.-.-</ecNumber>
    </recommendedName>
</protein>
<sequence length="166" mass="18469">MELDLALDREEGALQASEIGDLLDETVWLQQLEHWLQIVCGDESLDCPTLVRSAEELSLGLRFIDDATIADLNSTWRQKTGPTDVLSFAALDDAGDWMEGPSIELGDIVVSLETARRQAQEQGHSLQQELRWLVSHGLLHLLGWDHPDEKSLATMLALQERLLGDG</sequence>
<organism>
    <name type="scientific">Synechococcus sp. (strain CC9605)</name>
    <dbReference type="NCBI Taxonomy" id="110662"/>
    <lineage>
        <taxon>Bacteria</taxon>
        <taxon>Bacillati</taxon>
        <taxon>Cyanobacteriota</taxon>
        <taxon>Cyanophyceae</taxon>
        <taxon>Synechococcales</taxon>
        <taxon>Synechococcaceae</taxon>
        <taxon>Synechococcus</taxon>
    </lineage>
</organism>
<proteinExistence type="inferred from homology"/>
<evidence type="ECO:0000255" key="1">
    <source>
        <dbReference type="HAMAP-Rule" id="MF_00009"/>
    </source>
</evidence>
<feature type="chain" id="PRO_0000284333" description="Endoribonuclease YbeY">
    <location>
        <begin position="1"/>
        <end position="166"/>
    </location>
</feature>
<feature type="binding site" evidence="1">
    <location>
        <position position="136"/>
    </location>
    <ligand>
        <name>Zn(2+)</name>
        <dbReference type="ChEBI" id="CHEBI:29105"/>
        <note>catalytic</note>
    </ligand>
</feature>
<feature type="binding site" evidence="1">
    <location>
        <position position="140"/>
    </location>
    <ligand>
        <name>Zn(2+)</name>
        <dbReference type="ChEBI" id="CHEBI:29105"/>
        <note>catalytic</note>
    </ligand>
</feature>
<feature type="binding site" evidence="1">
    <location>
        <position position="146"/>
    </location>
    <ligand>
        <name>Zn(2+)</name>
        <dbReference type="ChEBI" id="CHEBI:29105"/>
        <note>catalytic</note>
    </ligand>
</feature>
<name>YBEY_SYNSC</name>